<evidence type="ECO:0000255" key="1">
    <source>
        <dbReference type="HAMAP-Rule" id="MF_01576"/>
    </source>
</evidence>
<accession>B1JV19</accession>
<proteinExistence type="inferred from homology"/>
<sequence>MTALLIDGNALSKTLRAQAAERAAALTARGHQPGLAVILVGANPASEVYVRNKIKACEDNGFFSLKDAYPATLSEADLLARIHELNRDPKIHGILVQLPLPAHIDSHKVIEAIAPEKDVDGFHVANAGALMTGKPLFRPCTPYGVMKMFEAHGIALQGANAVVIGRSNIVGKPMAMMLLDAGATVTICHSKTRDLAAHTREADIVVAAVGKRNILTADMVKPGATVIDVGMNRDDAGKLCGDVDFAGVKEVAGYITPVPGGVGPMTITMLLINTIESAERAAAAAA</sequence>
<dbReference type="EC" id="1.5.1.5" evidence="1"/>
<dbReference type="EC" id="3.5.4.9" evidence="1"/>
<dbReference type="EMBL" id="CP000958">
    <property type="protein sequence ID" value="ACA91319.1"/>
    <property type="molecule type" value="Genomic_DNA"/>
</dbReference>
<dbReference type="RefSeq" id="WP_012328828.1">
    <property type="nucleotide sequence ID" value="NC_010508.1"/>
</dbReference>
<dbReference type="SMR" id="B1JV19"/>
<dbReference type="GeneID" id="83048942"/>
<dbReference type="KEGG" id="bcm:Bcenmc03_2158"/>
<dbReference type="HOGENOM" id="CLU_034045_2_1_4"/>
<dbReference type="UniPathway" id="UPA00193"/>
<dbReference type="Proteomes" id="UP000002169">
    <property type="component" value="Chromosome 1"/>
</dbReference>
<dbReference type="GO" id="GO:0005829">
    <property type="term" value="C:cytosol"/>
    <property type="evidence" value="ECO:0007669"/>
    <property type="project" value="TreeGrafter"/>
</dbReference>
<dbReference type="GO" id="GO:0004477">
    <property type="term" value="F:methenyltetrahydrofolate cyclohydrolase activity"/>
    <property type="evidence" value="ECO:0007669"/>
    <property type="project" value="UniProtKB-UniRule"/>
</dbReference>
<dbReference type="GO" id="GO:0004488">
    <property type="term" value="F:methylenetetrahydrofolate dehydrogenase (NADP+) activity"/>
    <property type="evidence" value="ECO:0007669"/>
    <property type="project" value="UniProtKB-UniRule"/>
</dbReference>
<dbReference type="GO" id="GO:0000105">
    <property type="term" value="P:L-histidine biosynthetic process"/>
    <property type="evidence" value="ECO:0007669"/>
    <property type="project" value="UniProtKB-KW"/>
</dbReference>
<dbReference type="GO" id="GO:0009086">
    <property type="term" value="P:methionine biosynthetic process"/>
    <property type="evidence" value="ECO:0007669"/>
    <property type="project" value="UniProtKB-KW"/>
</dbReference>
<dbReference type="GO" id="GO:0006164">
    <property type="term" value="P:purine nucleotide biosynthetic process"/>
    <property type="evidence" value="ECO:0007669"/>
    <property type="project" value="UniProtKB-KW"/>
</dbReference>
<dbReference type="GO" id="GO:0035999">
    <property type="term" value="P:tetrahydrofolate interconversion"/>
    <property type="evidence" value="ECO:0007669"/>
    <property type="project" value="UniProtKB-UniRule"/>
</dbReference>
<dbReference type="CDD" id="cd01080">
    <property type="entry name" value="NAD_bind_m-THF_DH_Cyclohyd"/>
    <property type="match status" value="1"/>
</dbReference>
<dbReference type="FunFam" id="3.40.50.720:FF:000094">
    <property type="entry name" value="Bifunctional protein FolD"/>
    <property type="match status" value="1"/>
</dbReference>
<dbReference type="FunFam" id="3.40.50.10860:FF:000005">
    <property type="entry name" value="C-1-tetrahydrofolate synthase, cytoplasmic, putative"/>
    <property type="match status" value="1"/>
</dbReference>
<dbReference type="Gene3D" id="3.40.50.10860">
    <property type="entry name" value="Leucine Dehydrogenase, chain A, domain 1"/>
    <property type="match status" value="1"/>
</dbReference>
<dbReference type="Gene3D" id="3.40.50.720">
    <property type="entry name" value="NAD(P)-binding Rossmann-like Domain"/>
    <property type="match status" value="1"/>
</dbReference>
<dbReference type="HAMAP" id="MF_01576">
    <property type="entry name" value="THF_DHG_CYH"/>
    <property type="match status" value="1"/>
</dbReference>
<dbReference type="InterPro" id="IPR046346">
    <property type="entry name" value="Aminoacid_DH-like_N_sf"/>
</dbReference>
<dbReference type="InterPro" id="IPR036291">
    <property type="entry name" value="NAD(P)-bd_dom_sf"/>
</dbReference>
<dbReference type="InterPro" id="IPR000672">
    <property type="entry name" value="THF_DH/CycHdrlase"/>
</dbReference>
<dbReference type="InterPro" id="IPR020630">
    <property type="entry name" value="THF_DH/CycHdrlase_cat_dom"/>
</dbReference>
<dbReference type="InterPro" id="IPR020867">
    <property type="entry name" value="THF_DH/CycHdrlase_CS"/>
</dbReference>
<dbReference type="InterPro" id="IPR020631">
    <property type="entry name" value="THF_DH/CycHdrlase_NAD-bd_dom"/>
</dbReference>
<dbReference type="NCBIfam" id="NF008058">
    <property type="entry name" value="PRK10792.1"/>
    <property type="match status" value="1"/>
</dbReference>
<dbReference type="NCBIfam" id="NF010783">
    <property type="entry name" value="PRK14186.1"/>
    <property type="match status" value="1"/>
</dbReference>
<dbReference type="NCBIfam" id="NF010786">
    <property type="entry name" value="PRK14189.1"/>
    <property type="match status" value="1"/>
</dbReference>
<dbReference type="PANTHER" id="PTHR48099:SF5">
    <property type="entry name" value="C-1-TETRAHYDROFOLATE SYNTHASE, CYTOPLASMIC"/>
    <property type="match status" value="1"/>
</dbReference>
<dbReference type="PANTHER" id="PTHR48099">
    <property type="entry name" value="C-1-TETRAHYDROFOLATE SYNTHASE, CYTOPLASMIC-RELATED"/>
    <property type="match status" value="1"/>
</dbReference>
<dbReference type="Pfam" id="PF00763">
    <property type="entry name" value="THF_DHG_CYH"/>
    <property type="match status" value="1"/>
</dbReference>
<dbReference type="Pfam" id="PF02882">
    <property type="entry name" value="THF_DHG_CYH_C"/>
    <property type="match status" value="1"/>
</dbReference>
<dbReference type="PRINTS" id="PR00085">
    <property type="entry name" value="THFDHDRGNASE"/>
</dbReference>
<dbReference type="SUPFAM" id="SSF53223">
    <property type="entry name" value="Aminoacid dehydrogenase-like, N-terminal domain"/>
    <property type="match status" value="1"/>
</dbReference>
<dbReference type="SUPFAM" id="SSF51735">
    <property type="entry name" value="NAD(P)-binding Rossmann-fold domains"/>
    <property type="match status" value="1"/>
</dbReference>
<dbReference type="PROSITE" id="PS00766">
    <property type="entry name" value="THF_DHG_CYH_1"/>
    <property type="match status" value="1"/>
</dbReference>
<dbReference type="PROSITE" id="PS00767">
    <property type="entry name" value="THF_DHG_CYH_2"/>
    <property type="match status" value="1"/>
</dbReference>
<comment type="function">
    <text evidence="1">Catalyzes the oxidation of 5,10-methylenetetrahydrofolate to 5,10-methenyltetrahydrofolate and then the hydrolysis of 5,10-methenyltetrahydrofolate to 10-formyltetrahydrofolate.</text>
</comment>
<comment type="catalytic activity">
    <reaction evidence="1">
        <text>(6R)-5,10-methylene-5,6,7,8-tetrahydrofolate + NADP(+) = (6R)-5,10-methenyltetrahydrofolate + NADPH</text>
        <dbReference type="Rhea" id="RHEA:22812"/>
        <dbReference type="ChEBI" id="CHEBI:15636"/>
        <dbReference type="ChEBI" id="CHEBI:57455"/>
        <dbReference type="ChEBI" id="CHEBI:57783"/>
        <dbReference type="ChEBI" id="CHEBI:58349"/>
        <dbReference type="EC" id="1.5.1.5"/>
    </reaction>
</comment>
<comment type="catalytic activity">
    <reaction evidence="1">
        <text>(6R)-5,10-methenyltetrahydrofolate + H2O = (6R)-10-formyltetrahydrofolate + H(+)</text>
        <dbReference type="Rhea" id="RHEA:23700"/>
        <dbReference type="ChEBI" id="CHEBI:15377"/>
        <dbReference type="ChEBI" id="CHEBI:15378"/>
        <dbReference type="ChEBI" id="CHEBI:57455"/>
        <dbReference type="ChEBI" id="CHEBI:195366"/>
        <dbReference type="EC" id="3.5.4.9"/>
    </reaction>
</comment>
<comment type="pathway">
    <text evidence="1">One-carbon metabolism; tetrahydrofolate interconversion.</text>
</comment>
<comment type="subunit">
    <text evidence="1">Homodimer.</text>
</comment>
<comment type="similarity">
    <text evidence="1">Belongs to the tetrahydrofolate dehydrogenase/cyclohydrolase family.</text>
</comment>
<name>FOLD_BURO0</name>
<gene>
    <name evidence="1" type="primary">folD</name>
    <name type="ordered locus">Bcenmc03_2158</name>
</gene>
<feature type="chain" id="PRO_1000147447" description="Bifunctional protein FolD">
    <location>
        <begin position="1"/>
        <end position="286"/>
    </location>
</feature>
<feature type="binding site" evidence="1">
    <location>
        <begin position="165"/>
        <end position="167"/>
    </location>
    <ligand>
        <name>NADP(+)</name>
        <dbReference type="ChEBI" id="CHEBI:58349"/>
    </ligand>
</feature>
<feature type="binding site" evidence="1">
    <location>
        <position position="190"/>
    </location>
    <ligand>
        <name>NADP(+)</name>
        <dbReference type="ChEBI" id="CHEBI:58349"/>
    </ligand>
</feature>
<protein>
    <recommendedName>
        <fullName evidence="1">Bifunctional protein FolD</fullName>
    </recommendedName>
    <domain>
        <recommendedName>
            <fullName evidence="1">Methylenetetrahydrofolate dehydrogenase</fullName>
            <ecNumber evidence="1">1.5.1.5</ecNumber>
        </recommendedName>
    </domain>
    <domain>
        <recommendedName>
            <fullName evidence="1">Methenyltetrahydrofolate cyclohydrolase</fullName>
            <ecNumber evidence="1">3.5.4.9</ecNumber>
        </recommendedName>
    </domain>
</protein>
<reference key="1">
    <citation type="submission" date="2008-02" db="EMBL/GenBank/DDBJ databases">
        <title>Complete sequence of chromosome 1 of Burkholderia cenocepacia MC0-3.</title>
        <authorList>
            <person name="Copeland A."/>
            <person name="Lucas S."/>
            <person name="Lapidus A."/>
            <person name="Barry K."/>
            <person name="Bruce D."/>
            <person name="Goodwin L."/>
            <person name="Glavina del Rio T."/>
            <person name="Dalin E."/>
            <person name="Tice H."/>
            <person name="Pitluck S."/>
            <person name="Chain P."/>
            <person name="Malfatti S."/>
            <person name="Shin M."/>
            <person name="Vergez L."/>
            <person name="Schmutz J."/>
            <person name="Larimer F."/>
            <person name="Land M."/>
            <person name="Hauser L."/>
            <person name="Kyrpides N."/>
            <person name="Mikhailova N."/>
            <person name="Tiedje J."/>
            <person name="Richardson P."/>
        </authorList>
    </citation>
    <scope>NUCLEOTIDE SEQUENCE [LARGE SCALE GENOMIC DNA]</scope>
    <source>
        <strain>MC0-3</strain>
    </source>
</reference>
<organism>
    <name type="scientific">Burkholderia orbicola (strain MC0-3)</name>
    <dbReference type="NCBI Taxonomy" id="406425"/>
    <lineage>
        <taxon>Bacteria</taxon>
        <taxon>Pseudomonadati</taxon>
        <taxon>Pseudomonadota</taxon>
        <taxon>Betaproteobacteria</taxon>
        <taxon>Burkholderiales</taxon>
        <taxon>Burkholderiaceae</taxon>
        <taxon>Burkholderia</taxon>
        <taxon>Burkholderia cepacia complex</taxon>
        <taxon>Burkholderia orbicola</taxon>
    </lineage>
</organism>
<keyword id="KW-0028">Amino-acid biosynthesis</keyword>
<keyword id="KW-0368">Histidine biosynthesis</keyword>
<keyword id="KW-0378">Hydrolase</keyword>
<keyword id="KW-0486">Methionine biosynthesis</keyword>
<keyword id="KW-0511">Multifunctional enzyme</keyword>
<keyword id="KW-0521">NADP</keyword>
<keyword id="KW-0554">One-carbon metabolism</keyword>
<keyword id="KW-0560">Oxidoreductase</keyword>
<keyword id="KW-0658">Purine biosynthesis</keyword>